<comment type="function">
    <text evidence="1">May be involved in maturation of the 30S ribosomal subunit.</text>
</comment>
<comment type="subunit">
    <text evidence="1">Part of the 30S ribosomal subunit.</text>
</comment>
<comment type="similarity">
    <text evidence="1">Belongs to the eukaryotic ribosomal protein eS19 family.</text>
</comment>
<dbReference type="EMBL" id="AE000666">
    <property type="protein sequence ID" value="AAB86089.1"/>
    <property type="molecule type" value="Genomic_DNA"/>
</dbReference>
<dbReference type="PIR" id="H69082">
    <property type="entry name" value="H69082"/>
</dbReference>
<dbReference type="RefSeq" id="WP_010877224.1">
    <property type="nucleotide sequence ID" value="NC_000916.1"/>
</dbReference>
<dbReference type="SMR" id="O27653"/>
<dbReference type="FunCoup" id="O27653">
    <property type="interactions" value="163"/>
</dbReference>
<dbReference type="STRING" id="187420.MTH_1616"/>
<dbReference type="PaxDb" id="187420-MTH_1616"/>
<dbReference type="EnsemblBacteria" id="AAB86089">
    <property type="protein sequence ID" value="AAB86089"/>
    <property type="gene ID" value="MTH_1616"/>
</dbReference>
<dbReference type="KEGG" id="mth:MTH_1616"/>
<dbReference type="PATRIC" id="fig|187420.15.peg.1580"/>
<dbReference type="HOGENOM" id="CLU_108559_1_0_2"/>
<dbReference type="InParanoid" id="O27653"/>
<dbReference type="Proteomes" id="UP000005223">
    <property type="component" value="Chromosome"/>
</dbReference>
<dbReference type="GO" id="GO:0022627">
    <property type="term" value="C:cytosolic small ribosomal subunit"/>
    <property type="evidence" value="ECO:0007669"/>
    <property type="project" value="TreeGrafter"/>
</dbReference>
<dbReference type="GO" id="GO:0003723">
    <property type="term" value="F:RNA binding"/>
    <property type="evidence" value="ECO:0007669"/>
    <property type="project" value="TreeGrafter"/>
</dbReference>
<dbReference type="GO" id="GO:0003735">
    <property type="term" value="F:structural constituent of ribosome"/>
    <property type="evidence" value="ECO:0007669"/>
    <property type="project" value="InterPro"/>
</dbReference>
<dbReference type="GO" id="GO:0000028">
    <property type="term" value="P:ribosomal small subunit assembly"/>
    <property type="evidence" value="ECO:0007669"/>
    <property type="project" value="TreeGrafter"/>
</dbReference>
<dbReference type="GO" id="GO:0006412">
    <property type="term" value="P:translation"/>
    <property type="evidence" value="ECO:0007669"/>
    <property type="project" value="UniProtKB-UniRule"/>
</dbReference>
<dbReference type="FunFam" id="1.10.10.10:FF:000449">
    <property type="entry name" value="30S ribosomal protein S19e"/>
    <property type="match status" value="1"/>
</dbReference>
<dbReference type="Gene3D" id="1.10.10.10">
    <property type="entry name" value="Winged helix-like DNA-binding domain superfamily/Winged helix DNA-binding domain"/>
    <property type="match status" value="1"/>
</dbReference>
<dbReference type="HAMAP" id="MF_01474">
    <property type="entry name" value="Ribosomal_eS19"/>
    <property type="match status" value="1"/>
</dbReference>
<dbReference type="InterPro" id="IPR001266">
    <property type="entry name" value="Ribosomal_eS19"/>
</dbReference>
<dbReference type="InterPro" id="IPR027548">
    <property type="entry name" value="Ribosomal_eS19_archaeal"/>
</dbReference>
<dbReference type="InterPro" id="IPR018277">
    <property type="entry name" value="Ribosomal_eS19_CS"/>
</dbReference>
<dbReference type="InterPro" id="IPR036388">
    <property type="entry name" value="WH-like_DNA-bd_sf"/>
</dbReference>
<dbReference type="InterPro" id="IPR036390">
    <property type="entry name" value="WH_DNA-bd_sf"/>
</dbReference>
<dbReference type="NCBIfam" id="NF006811">
    <property type="entry name" value="PRK09333.1"/>
    <property type="match status" value="1"/>
</dbReference>
<dbReference type="PANTHER" id="PTHR11710">
    <property type="entry name" value="40S RIBOSOMAL PROTEIN S19"/>
    <property type="match status" value="1"/>
</dbReference>
<dbReference type="PANTHER" id="PTHR11710:SF0">
    <property type="entry name" value="40S RIBOSOMAL PROTEIN S19"/>
    <property type="match status" value="1"/>
</dbReference>
<dbReference type="Pfam" id="PF01090">
    <property type="entry name" value="Ribosomal_S19e"/>
    <property type="match status" value="1"/>
</dbReference>
<dbReference type="SMART" id="SM01413">
    <property type="entry name" value="Ribosomal_S19e"/>
    <property type="match status" value="1"/>
</dbReference>
<dbReference type="SUPFAM" id="SSF46785">
    <property type="entry name" value="Winged helix' DNA-binding domain"/>
    <property type="match status" value="1"/>
</dbReference>
<dbReference type="PROSITE" id="PS00628">
    <property type="entry name" value="RIBOSOMAL_S19E"/>
    <property type="match status" value="1"/>
</dbReference>
<sequence>MTTVYDVPADLLINRVAEELKNDSKVKSPEWVNFVKTGVHKERRPENPDWWYVRAAALLRRVYIDGPVGVNSLRTHYGGKKDRGSRPEKFRRGSGAIIRRALQQLEESGLIKREENGRVITPEGRSFLDKAAAEVKKEVEGLERY</sequence>
<keyword id="KW-1185">Reference proteome</keyword>
<keyword id="KW-0687">Ribonucleoprotein</keyword>
<keyword id="KW-0689">Ribosomal protein</keyword>
<gene>
    <name evidence="1" type="primary">rps19e</name>
    <name type="ordered locus">MTH_1616</name>
</gene>
<organism>
    <name type="scientific">Methanothermobacter thermautotrophicus (strain ATCC 29096 / DSM 1053 / JCM 10044 / NBRC 100330 / Delta H)</name>
    <name type="common">Methanobacterium thermoautotrophicum</name>
    <dbReference type="NCBI Taxonomy" id="187420"/>
    <lineage>
        <taxon>Archaea</taxon>
        <taxon>Methanobacteriati</taxon>
        <taxon>Methanobacteriota</taxon>
        <taxon>Methanomada group</taxon>
        <taxon>Methanobacteria</taxon>
        <taxon>Methanobacteriales</taxon>
        <taxon>Methanobacteriaceae</taxon>
        <taxon>Methanothermobacter</taxon>
    </lineage>
</organism>
<evidence type="ECO:0000255" key="1">
    <source>
        <dbReference type="HAMAP-Rule" id="MF_01474"/>
    </source>
</evidence>
<evidence type="ECO:0000305" key="2"/>
<proteinExistence type="inferred from homology"/>
<name>RS19E_METTH</name>
<reference key="1">
    <citation type="journal article" date="1997" name="J. Bacteriol.">
        <title>Complete genome sequence of Methanobacterium thermoautotrophicum deltaH: functional analysis and comparative genomics.</title>
        <authorList>
            <person name="Smith D.R."/>
            <person name="Doucette-Stamm L.A."/>
            <person name="Deloughery C."/>
            <person name="Lee H.-M."/>
            <person name="Dubois J."/>
            <person name="Aldredge T."/>
            <person name="Bashirzadeh R."/>
            <person name="Blakely D."/>
            <person name="Cook R."/>
            <person name="Gilbert K."/>
            <person name="Harrison D."/>
            <person name="Hoang L."/>
            <person name="Keagle P."/>
            <person name="Lumm W."/>
            <person name="Pothier B."/>
            <person name="Qiu D."/>
            <person name="Spadafora R."/>
            <person name="Vicare R."/>
            <person name="Wang Y."/>
            <person name="Wierzbowski J."/>
            <person name="Gibson R."/>
            <person name="Jiwani N."/>
            <person name="Caruso A."/>
            <person name="Bush D."/>
            <person name="Safer H."/>
            <person name="Patwell D."/>
            <person name="Prabhakar S."/>
            <person name="McDougall S."/>
            <person name="Shimer G."/>
            <person name="Goyal A."/>
            <person name="Pietrovski S."/>
            <person name="Church G.M."/>
            <person name="Daniels C.J."/>
            <person name="Mao J.-I."/>
            <person name="Rice P."/>
            <person name="Noelling J."/>
            <person name="Reeve J.N."/>
        </authorList>
    </citation>
    <scope>NUCLEOTIDE SEQUENCE [LARGE SCALE GENOMIC DNA]</scope>
    <source>
        <strain>ATCC 29096 / DSM 1053 / JCM 10044 / NBRC 100330 / Delta H</strain>
    </source>
</reference>
<accession>O27653</accession>
<protein>
    <recommendedName>
        <fullName evidence="1">Small ribosomal subunit protein eS19</fullName>
    </recommendedName>
    <alternativeName>
        <fullName evidence="2">30S ribosomal protein S19e</fullName>
    </alternativeName>
</protein>
<feature type="chain" id="PRO_0000153841" description="Small ribosomal subunit protein eS19">
    <location>
        <begin position="1"/>
        <end position="145"/>
    </location>
</feature>